<gene>
    <name evidence="1" type="primary">secA</name>
    <name type="ordered locus">NMA1735</name>
</gene>
<dbReference type="EC" id="7.4.2.8" evidence="1"/>
<dbReference type="EMBL" id="AL157959">
    <property type="protein sequence ID" value="CAM08863.1"/>
    <property type="molecule type" value="Genomic_DNA"/>
</dbReference>
<dbReference type="PIR" id="G81797">
    <property type="entry name" value="G81797"/>
</dbReference>
<dbReference type="RefSeq" id="WP_002247008.1">
    <property type="nucleotide sequence ID" value="NC_003116.1"/>
</dbReference>
<dbReference type="SMR" id="A1ISV1"/>
<dbReference type="EnsemblBacteria" id="CAM08863">
    <property type="protein sequence ID" value="CAM08863"/>
    <property type="gene ID" value="NMA1735"/>
</dbReference>
<dbReference type="GeneID" id="93387842"/>
<dbReference type="KEGG" id="nma:NMA1735"/>
<dbReference type="HOGENOM" id="CLU_005314_3_0_4"/>
<dbReference type="Proteomes" id="UP000000626">
    <property type="component" value="Chromosome"/>
</dbReference>
<dbReference type="GO" id="GO:0031522">
    <property type="term" value="C:cell envelope Sec protein transport complex"/>
    <property type="evidence" value="ECO:0007669"/>
    <property type="project" value="TreeGrafter"/>
</dbReference>
<dbReference type="GO" id="GO:0005829">
    <property type="term" value="C:cytosol"/>
    <property type="evidence" value="ECO:0007669"/>
    <property type="project" value="TreeGrafter"/>
</dbReference>
<dbReference type="GO" id="GO:0005886">
    <property type="term" value="C:plasma membrane"/>
    <property type="evidence" value="ECO:0007669"/>
    <property type="project" value="UniProtKB-SubCell"/>
</dbReference>
<dbReference type="GO" id="GO:0005524">
    <property type="term" value="F:ATP binding"/>
    <property type="evidence" value="ECO:0007669"/>
    <property type="project" value="UniProtKB-UniRule"/>
</dbReference>
<dbReference type="GO" id="GO:0046872">
    <property type="term" value="F:metal ion binding"/>
    <property type="evidence" value="ECO:0007669"/>
    <property type="project" value="UniProtKB-KW"/>
</dbReference>
<dbReference type="GO" id="GO:0008564">
    <property type="term" value="F:protein-exporting ATPase activity"/>
    <property type="evidence" value="ECO:0007669"/>
    <property type="project" value="UniProtKB-EC"/>
</dbReference>
<dbReference type="GO" id="GO:0065002">
    <property type="term" value="P:intracellular protein transmembrane transport"/>
    <property type="evidence" value="ECO:0007669"/>
    <property type="project" value="UniProtKB-UniRule"/>
</dbReference>
<dbReference type="GO" id="GO:0017038">
    <property type="term" value="P:protein import"/>
    <property type="evidence" value="ECO:0007669"/>
    <property type="project" value="InterPro"/>
</dbReference>
<dbReference type="GO" id="GO:0006605">
    <property type="term" value="P:protein targeting"/>
    <property type="evidence" value="ECO:0007669"/>
    <property type="project" value="UniProtKB-UniRule"/>
</dbReference>
<dbReference type="GO" id="GO:0043952">
    <property type="term" value="P:protein transport by the Sec complex"/>
    <property type="evidence" value="ECO:0007669"/>
    <property type="project" value="TreeGrafter"/>
</dbReference>
<dbReference type="CDD" id="cd17928">
    <property type="entry name" value="DEXDc_SecA"/>
    <property type="match status" value="1"/>
</dbReference>
<dbReference type="CDD" id="cd18803">
    <property type="entry name" value="SF2_C_secA"/>
    <property type="match status" value="1"/>
</dbReference>
<dbReference type="FunFam" id="3.40.50.300:FF:000113">
    <property type="entry name" value="Preprotein translocase subunit SecA"/>
    <property type="match status" value="1"/>
</dbReference>
<dbReference type="FunFam" id="3.90.1440.10:FF:000001">
    <property type="entry name" value="Preprotein translocase subunit SecA"/>
    <property type="match status" value="1"/>
</dbReference>
<dbReference type="FunFam" id="1.10.3060.10:FF:000003">
    <property type="entry name" value="Protein translocase subunit SecA"/>
    <property type="match status" value="1"/>
</dbReference>
<dbReference type="FunFam" id="3.40.50.300:FF:000334">
    <property type="entry name" value="Protein translocase subunit SecA"/>
    <property type="match status" value="1"/>
</dbReference>
<dbReference type="Gene3D" id="1.10.3060.10">
    <property type="entry name" value="Helical scaffold and wing domains of SecA"/>
    <property type="match status" value="1"/>
</dbReference>
<dbReference type="Gene3D" id="3.40.50.300">
    <property type="entry name" value="P-loop containing nucleotide triphosphate hydrolases"/>
    <property type="match status" value="2"/>
</dbReference>
<dbReference type="Gene3D" id="3.90.1440.10">
    <property type="entry name" value="SecA, preprotein cross-linking domain"/>
    <property type="match status" value="1"/>
</dbReference>
<dbReference type="HAMAP" id="MF_01382">
    <property type="entry name" value="SecA"/>
    <property type="match status" value="1"/>
</dbReference>
<dbReference type="InterPro" id="IPR014001">
    <property type="entry name" value="Helicase_ATP-bd"/>
</dbReference>
<dbReference type="InterPro" id="IPR001650">
    <property type="entry name" value="Helicase_C-like"/>
</dbReference>
<dbReference type="InterPro" id="IPR027417">
    <property type="entry name" value="P-loop_NTPase"/>
</dbReference>
<dbReference type="InterPro" id="IPR004027">
    <property type="entry name" value="SEC_C_motif"/>
</dbReference>
<dbReference type="InterPro" id="IPR000185">
    <property type="entry name" value="SecA"/>
</dbReference>
<dbReference type="InterPro" id="IPR020937">
    <property type="entry name" value="SecA_CS"/>
</dbReference>
<dbReference type="InterPro" id="IPR011115">
    <property type="entry name" value="SecA_DEAD"/>
</dbReference>
<dbReference type="InterPro" id="IPR014018">
    <property type="entry name" value="SecA_motor_DEAD"/>
</dbReference>
<dbReference type="InterPro" id="IPR011130">
    <property type="entry name" value="SecA_preprotein_X-link_dom"/>
</dbReference>
<dbReference type="InterPro" id="IPR044722">
    <property type="entry name" value="SecA_SF2_C"/>
</dbReference>
<dbReference type="InterPro" id="IPR011116">
    <property type="entry name" value="SecA_Wing/Scaffold"/>
</dbReference>
<dbReference type="InterPro" id="IPR036266">
    <property type="entry name" value="SecA_Wing/Scaffold_sf"/>
</dbReference>
<dbReference type="InterPro" id="IPR036670">
    <property type="entry name" value="SecA_X-link_sf"/>
</dbReference>
<dbReference type="NCBIfam" id="NF009538">
    <property type="entry name" value="PRK12904.1"/>
    <property type="match status" value="1"/>
</dbReference>
<dbReference type="NCBIfam" id="TIGR00963">
    <property type="entry name" value="secA"/>
    <property type="match status" value="1"/>
</dbReference>
<dbReference type="PANTHER" id="PTHR30612:SF0">
    <property type="entry name" value="CHLOROPLAST PROTEIN-TRANSPORTING ATPASE"/>
    <property type="match status" value="1"/>
</dbReference>
<dbReference type="PANTHER" id="PTHR30612">
    <property type="entry name" value="SECA INNER MEMBRANE COMPONENT OF SEC PROTEIN SECRETION SYSTEM"/>
    <property type="match status" value="1"/>
</dbReference>
<dbReference type="Pfam" id="PF21090">
    <property type="entry name" value="P-loop_SecA"/>
    <property type="match status" value="1"/>
</dbReference>
<dbReference type="Pfam" id="PF02810">
    <property type="entry name" value="SEC-C"/>
    <property type="match status" value="1"/>
</dbReference>
<dbReference type="Pfam" id="PF07517">
    <property type="entry name" value="SecA_DEAD"/>
    <property type="match status" value="1"/>
</dbReference>
<dbReference type="Pfam" id="PF01043">
    <property type="entry name" value="SecA_PP_bind"/>
    <property type="match status" value="1"/>
</dbReference>
<dbReference type="Pfam" id="PF07516">
    <property type="entry name" value="SecA_SW"/>
    <property type="match status" value="1"/>
</dbReference>
<dbReference type="PRINTS" id="PR00906">
    <property type="entry name" value="SECA"/>
</dbReference>
<dbReference type="SMART" id="SM00957">
    <property type="entry name" value="SecA_DEAD"/>
    <property type="match status" value="1"/>
</dbReference>
<dbReference type="SMART" id="SM00958">
    <property type="entry name" value="SecA_PP_bind"/>
    <property type="match status" value="1"/>
</dbReference>
<dbReference type="SUPFAM" id="SSF81886">
    <property type="entry name" value="Helical scaffold and wing domains of SecA"/>
    <property type="match status" value="1"/>
</dbReference>
<dbReference type="SUPFAM" id="SSF52540">
    <property type="entry name" value="P-loop containing nucleoside triphosphate hydrolases"/>
    <property type="match status" value="2"/>
</dbReference>
<dbReference type="SUPFAM" id="SSF81767">
    <property type="entry name" value="Pre-protein crosslinking domain of SecA"/>
    <property type="match status" value="1"/>
</dbReference>
<dbReference type="PROSITE" id="PS01312">
    <property type="entry name" value="SECA"/>
    <property type="match status" value="1"/>
</dbReference>
<dbReference type="PROSITE" id="PS51196">
    <property type="entry name" value="SECA_MOTOR_DEAD"/>
    <property type="match status" value="1"/>
</dbReference>
<reference key="1">
    <citation type="journal article" date="2000" name="Nature">
        <title>Complete DNA sequence of a serogroup A strain of Neisseria meningitidis Z2491.</title>
        <authorList>
            <person name="Parkhill J."/>
            <person name="Achtman M."/>
            <person name="James K.D."/>
            <person name="Bentley S.D."/>
            <person name="Churcher C.M."/>
            <person name="Klee S.R."/>
            <person name="Morelli G."/>
            <person name="Basham D."/>
            <person name="Brown D."/>
            <person name="Chillingworth T."/>
            <person name="Davies R.M."/>
            <person name="Davis P."/>
            <person name="Devlin K."/>
            <person name="Feltwell T."/>
            <person name="Hamlin N."/>
            <person name="Holroyd S."/>
            <person name="Jagels K."/>
            <person name="Leather S."/>
            <person name="Moule S."/>
            <person name="Mungall K.L."/>
            <person name="Quail M.A."/>
            <person name="Rajandream M.A."/>
            <person name="Rutherford K.M."/>
            <person name="Simmonds M."/>
            <person name="Skelton J."/>
            <person name="Whitehead S."/>
            <person name="Spratt B.G."/>
            <person name="Barrell B.G."/>
        </authorList>
    </citation>
    <scope>NUCLEOTIDE SEQUENCE [LARGE SCALE GENOMIC DNA]</scope>
    <source>
        <strain>DSM 15465 / Z2491</strain>
    </source>
</reference>
<protein>
    <recommendedName>
        <fullName evidence="1">Protein translocase subunit SecA</fullName>
        <ecNumber evidence="1">7.4.2.8</ecNumber>
    </recommendedName>
</protein>
<keyword id="KW-0067">ATP-binding</keyword>
<keyword id="KW-0997">Cell inner membrane</keyword>
<keyword id="KW-1003">Cell membrane</keyword>
<keyword id="KW-0963">Cytoplasm</keyword>
<keyword id="KW-0472">Membrane</keyword>
<keyword id="KW-0479">Metal-binding</keyword>
<keyword id="KW-0547">Nucleotide-binding</keyword>
<keyword id="KW-0653">Protein transport</keyword>
<keyword id="KW-1278">Translocase</keyword>
<keyword id="KW-0811">Translocation</keyword>
<keyword id="KW-0813">Transport</keyword>
<keyword id="KW-0862">Zinc</keyword>
<feature type="chain" id="PRO_0000320862" description="Protein translocase subunit SecA">
    <location>
        <begin position="1"/>
        <end position="916"/>
    </location>
</feature>
<feature type="binding site" evidence="1">
    <location>
        <position position="87"/>
    </location>
    <ligand>
        <name>ATP</name>
        <dbReference type="ChEBI" id="CHEBI:30616"/>
    </ligand>
</feature>
<feature type="binding site" evidence="1">
    <location>
        <begin position="105"/>
        <end position="109"/>
    </location>
    <ligand>
        <name>ATP</name>
        <dbReference type="ChEBI" id="CHEBI:30616"/>
    </ligand>
</feature>
<feature type="binding site" evidence="1">
    <location>
        <position position="507"/>
    </location>
    <ligand>
        <name>ATP</name>
        <dbReference type="ChEBI" id="CHEBI:30616"/>
    </ligand>
</feature>
<feature type="binding site" evidence="1">
    <location>
        <position position="900"/>
    </location>
    <ligand>
        <name>Zn(2+)</name>
        <dbReference type="ChEBI" id="CHEBI:29105"/>
    </ligand>
</feature>
<feature type="binding site" evidence="1">
    <location>
        <position position="902"/>
    </location>
    <ligand>
        <name>Zn(2+)</name>
        <dbReference type="ChEBI" id="CHEBI:29105"/>
    </ligand>
</feature>
<feature type="binding site" evidence="1">
    <location>
        <position position="911"/>
    </location>
    <ligand>
        <name>Zn(2+)</name>
        <dbReference type="ChEBI" id="CHEBI:29105"/>
    </ligand>
</feature>
<feature type="binding site" evidence="1">
    <location>
        <position position="912"/>
    </location>
    <ligand>
        <name>Zn(2+)</name>
        <dbReference type="ChEBI" id="CHEBI:29105"/>
    </ligand>
</feature>
<comment type="function">
    <text evidence="1">Part of the Sec protein translocase complex. Interacts with the SecYEG preprotein conducting channel. Has a central role in coupling the hydrolysis of ATP to the transfer of proteins into and across the cell membrane, serving both as a receptor for the preprotein-SecB complex and as an ATP-driven molecular motor driving the stepwise translocation of polypeptide chains across the membrane.</text>
</comment>
<comment type="catalytic activity">
    <reaction evidence="1">
        <text>ATP + H2O + cellular proteinSide 1 = ADP + phosphate + cellular proteinSide 2.</text>
        <dbReference type="EC" id="7.4.2.8"/>
    </reaction>
</comment>
<comment type="cofactor">
    <cofactor evidence="1">
        <name>Zn(2+)</name>
        <dbReference type="ChEBI" id="CHEBI:29105"/>
    </cofactor>
    <text evidence="1">May bind 1 zinc ion per subunit.</text>
</comment>
<comment type="subunit">
    <text evidence="1">Monomer and homodimer. Part of the essential Sec protein translocation apparatus which comprises SecA, SecYEG and auxiliary proteins SecDF-YajC and YidC.</text>
</comment>
<comment type="subcellular location">
    <subcellularLocation>
        <location evidence="1">Cell inner membrane</location>
        <topology evidence="1">Peripheral membrane protein</topology>
        <orientation evidence="1">Cytoplasmic side</orientation>
    </subcellularLocation>
    <subcellularLocation>
        <location evidence="1">Cytoplasm</location>
    </subcellularLocation>
    <text evidence="1">Distribution is 50-50.</text>
</comment>
<comment type="similarity">
    <text evidence="1">Belongs to the SecA family.</text>
</comment>
<accession>A1ISV1</accession>
<evidence type="ECO:0000255" key="1">
    <source>
        <dbReference type="HAMAP-Rule" id="MF_01382"/>
    </source>
</evidence>
<name>SECA_NEIMA</name>
<sequence length="916" mass="103330">MLTNIAKKIFGSRNDRLLKQYRKSVARINALEEQMQALSDADLQAKTAEFKQRLADGQTLDGILPEAFAVCREASRRTLGMRHFDVQLIGGMVLHDGKIAEMRTGEGKTLVATLAVYLNALAGKGVHVVTVNDYLASRDAGIMEPLYNFLGLTVGVIISDMQPFDRQNAYAADITYGTNNEFGFDYLRDNMVTDQYDKVQRELNFAVVDEVDSILIDEARTPLIISGQADDNIQLYQIMNTVPPHLVRQETEEGEGDYWVDEKAHQVILSEAGHEHAEQILTQMGLLAENDSLYSAANIALMHHLMAALRAHTLFHKDQHYVIQDGEIVIVDEFTGRLMSGRRWSEGLHQAVEAKEGVEIKRENQTLASITFQNYFRLYTKLSGMTGTADTEAFEFQSIYNLETVIIPTNRPVQRKDFNDQIFRSAEEKFEAVVKDIEECHKRGQPVLVGTTSIENSELVSHLLQKAGLPHNVLNAKEHEREALIVAQAGKVGAITVATNMAGRGTDIVLGGNLKHQTDAIRADEALSDEEKQAQISALEDGWQAEHDKVMEAGGLHIIGTERHESRRIDNQLRGRSGRQGDPGSSRFYLSFEDPLLRLFALDRAAAILNRLAPERGVAIEHNLLTRQIEGAQRKVEGRNFDMRKQVLEYDDVANEQRKVIYSQRNEILTSKDISDLMKEIRSDVVSDLVDTYMPPDSMEEQWDIPTLENRLAAEFRLHEDIQSWLKADNAIDGQDIKERLIERIENEYAAKTELVGKQAMADFERNVMLQVIDNQWREHLAAMDYLRQGIHLRSYAQKNPKQEYKREAFTMFQDLWNGIKFHIASLLTSVQIEQNPVAVVEEQPIGNIQSIHSESPDMEELLGQSQTDLVTEAFNPDGTDFSPEALEARGQIVHRNDPCPCGSGLKYKQCHGKLA</sequence>
<proteinExistence type="inferred from homology"/>
<organism>
    <name type="scientific">Neisseria meningitidis serogroup A / serotype 4A (strain DSM 15465 / Z2491)</name>
    <dbReference type="NCBI Taxonomy" id="122587"/>
    <lineage>
        <taxon>Bacteria</taxon>
        <taxon>Pseudomonadati</taxon>
        <taxon>Pseudomonadota</taxon>
        <taxon>Betaproteobacteria</taxon>
        <taxon>Neisseriales</taxon>
        <taxon>Neisseriaceae</taxon>
        <taxon>Neisseria</taxon>
    </lineage>
</organism>